<comment type="function">
    <text evidence="1">May be involved in telomere capping.</text>
</comment>
<comment type="subcellular location">
    <subcellularLocation>
        <location evidence="3">Membrane</location>
        <topology evidence="3">Single-pass type I membrane protein</topology>
    </subcellularLocation>
</comment>
<comment type="similarity">
    <text evidence="3">Belongs to the MTC6 family.</text>
</comment>
<proteinExistence type="inferred from homology"/>
<gene>
    <name type="primary">MTC6</name>
    <name type="ordered locus">CAALFM_C305020WA</name>
    <name type="ORF">CaO19.13392</name>
    <name type="ORF">CaO19.5971</name>
</gene>
<protein>
    <recommendedName>
        <fullName>Maintenance of telomere capping protein 6</fullName>
    </recommendedName>
</protein>
<reference key="1">
    <citation type="journal article" date="2004" name="Proc. Natl. Acad. Sci. U.S.A.">
        <title>The diploid genome sequence of Candida albicans.</title>
        <authorList>
            <person name="Jones T."/>
            <person name="Federspiel N.A."/>
            <person name="Chibana H."/>
            <person name="Dungan J."/>
            <person name="Kalman S."/>
            <person name="Magee B.B."/>
            <person name="Newport G."/>
            <person name="Thorstenson Y.R."/>
            <person name="Agabian N."/>
            <person name="Magee P.T."/>
            <person name="Davis R.W."/>
            <person name="Scherer S."/>
        </authorList>
    </citation>
    <scope>NUCLEOTIDE SEQUENCE [LARGE SCALE GENOMIC DNA]</scope>
    <source>
        <strain>SC5314 / ATCC MYA-2876</strain>
    </source>
</reference>
<reference key="2">
    <citation type="journal article" date="2007" name="Genome Biol.">
        <title>Assembly of the Candida albicans genome into sixteen supercontigs aligned on the eight chromosomes.</title>
        <authorList>
            <person name="van het Hoog M."/>
            <person name="Rast T.J."/>
            <person name="Martchenko M."/>
            <person name="Grindle S."/>
            <person name="Dignard D."/>
            <person name="Hogues H."/>
            <person name="Cuomo C."/>
            <person name="Berriman M."/>
            <person name="Scherer S."/>
            <person name="Magee B.B."/>
            <person name="Whiteway M."/>
            <person name="Chibana H."/>
            <person name="Nantel A."/>
            <person name="Magee P.T."/>
        </authorList>
    </citation>
    <scope>GENOME REANNOTATION</scope>
    <source>
        <strain>SC5314 / ATCC MYA-2876</strain>
    </source>
</reference>
<reference key="3">
    <citation type="journal article" date="2013" name="Genome Biol.">
        <title>Assembly of a phased diploid Candida albicans genome facilitates allele-specific measurements and provides a simple model for repeat and indel structure.</title>
        <authorList>
            <person name="Muzzey D."/>
            <person name="Schwartz K."/>
            <person name="Weissman J.S."/>
            <person name="Sherlock G."/>
        </authorList>
    </citation>
    <scope>NUCLEOTIDE SEQUENCE [LARGE SCALE GENOMIC DNA]</scope>
    <scope>GENOME REANNOTATION</scope>
    <source>
        <strain>SC5314 / ATCC MYA-2876</strain>
    </source>
</reference>
<name>MTC6_CANAL</name>
<keyword id="KW-0325">Glycoprotein</keyword>
<keyword id="KW-0472">Membrane</keyword>
<keyword id="KW-1185">Reference proteome</keyword>
<keyword id="KW-0732">Signal</keyword>
<keyword id="KW-0812">Transmembrane</keyword>
<keyword id="KW-1133">Transmembrane helix</keyword>
<evidence type="ECO:0000250" key="1"/>
<evidence type="ECO:0000255" key="2"/>
<evidence type="ECO:0000305" key="3"/>
<sequence length="614" mass="69768">MTSLLFAFSLFLSFSVGSIFPFSISNGPAVNDTLQNAIRSQRDVSKPIPIDRVGFSGVSLSLFFESEGYSSDSLSNLNGLLKENVDGVMIDLYWNEFTSKWQLCPAPFPNNITYTTASNRIVDVSWNNKTYKCDPNLSTDNIMSILNSFIRDTNTDVEANFMHVMYNLKSIHYEKSNQTISLENIYKEKNSNLNVVGMDTLNDTVSLLSSYIFTPTLLKQYQSTSNKYTNSSSSIRYIDSLNETQAIQDFYSQSTILMPSLQTVLLTQYKRLMVHVVTNDMAESSRSYQISSSDKDTIFFNSDLPASIFHTDNASADELCYELSDAYNGTDVNIAEFNKVSLNATLRLVVDDDKTPFTTKSLSKYVRCGYCPIFNSTEYSSQKVTEGNSSIISREFASNLFWSWAPGQPSGPDNCINCTRPTTNNTSKHSDDNGEEEEEGNNIAYKCVALTEEGWEVSNCYEKYLFACQNKLSRNEWKLNNSTKRNYFDIDDDDCPEGYFFSLPRSNIEMLSLMTTVKQENVNYPIWIDLNDITVENCFVSGGPYAQCPYQETVTTDKFVRMIAPSFVVAMVVLVLIFIEKVFRKTPIQTNRKRYWKKAIHEYYAKNDYEGVPS</sequence>
<dbReference type="EMBL" id="CP017625">
    <property type="protein sequence ID" value="AOW28517.1"/>
    <property type="molecule type" value="Genomic_DNA"/>
</dbReference>
<dbReference type="RefSeq" id="XP_723182.1">
    <property type="nucleotide sequence ID" value="XM_718089.1"/>
</dbReference>
<dbReference type="FunCoup" id="Q5AND1">
    <property type="interactions" value="16"/>
</dbReference>
<dbReference type="STRING" id="237561.Q5AND1"/>
<dbReference type="GlyCosmos" id="Q5AND1">
    <property type="glycosylation" value="18 sites, No reported glycans"/>
</dbReference>
<dbReference type="EnsemblFungi" id="C3_05020W_A-T">
    <property type="protein sequence ID" value="C3_05020W_A-T-p1"/>
    <property type="gene ID" value="C3_05020W_A"/>
</dbReference>
<dbReference type="GeneID" id="3635170"/>
<dbReference type="KEGG" id="cal:CAALFM_C305020WA"/>
<dbReference type="CGD" id="CAL0000178984">
    <property type="gene designation" value="orf19.13392"/>
</dbReference>
<dbReference type="VEuPathDB" id="FungiDB:C3_05020W_A"/>
<dbReference type="eggNOG" id="ENOG502QVFP">
    <property type="taxonomic scope" value="Eukaryota"/>
</dbReference>
<dbReference type="HOGENOM" id="CLU_033723_0_0_1"/>
<dbReference type="InParanoid" id="Q5AND1"/>
<dbReference type="OMA" id="WGTIDPQ"/>
<dbReference type="OrthoDB" id="5573651at2759"/>
<dbReference type="PRO" id="PR:Q5AND1"/>
<dbReference type="Proteomes" id="UP000000559">
    <property type="component" value="Chromosome 3"/>
</dbReference>
<dbReference type="GO" id="GO:0016020">
    <property type="term" value="C:membrane"/>
    <property type="evidence" value="ECO:0007669"/>
    <property type="project" value="UniProtKB-SubCell"/>
</dbReference>
<dbReference type="InterPro" id="IPR051008">
    <property type="entry name" value="Telomere_Capping_Maintenance"/>
</dbReference>
<dbReference type="PANTHER" id="PTHR35518:SF2">
    <property type="entry name" value="MAINTENANCE OF TELOMERE CAPPING PROTEIN 6"/>
    <property type="match status" value="1"/>
</dbReference>
<dbReference type="PANTHER" id="PTHR35518">
    <property type="entry name" value="MAINTENANCE OF TELOMOERE CAPPING"/>
    <property type="match status" value="1"/>
</dbReference>
<dbReference type="Pfam" id="PF25506">
    <property type="entry name" value="TIM-barrel_MTC6"/>
    <property type="match status" value="1"/>
</dbReference>
<feature type="signal peptide" evidence="2">
    <location>
        <begin position="1"/>
        <end position="17"/>
    </location>
</feature>
<feature type="chain" id="PRO_0000407772" description="Maintenance of telomere capping protein 6">
    <location>
        <begin position="18"/>
        <end position="614"/>
    </location>
</feature>
<feature type="topological domain" description="Extracellular" evidence="2">
    <location>
        <begin position="18"/>
        <end position="558"/>
    </location>
</feature>
<feature type="transmembrane region" description="Helical" evidence="2">
    <location>
        <begin position="559"/>
        <end position="579"/>
    </location>
</feature>
<feature type="topological domain" description="Cytoplasmic" evidence="2">
    <location>
        <begin position="580"/>
        <end position="614"/>
    </location>
</feature>
<feature type="glycosylation site" description="N-linked (GlcNAc...) asparagine" evidence="2">
    <location>
        <position position="31"/>
    </location>
</feature>
<feature type="glycosylation site" description="N-linked (GlcNAc...) asparagine" evidence="2">
    <location>
        <position position="111"/>
    </location>
</feature>
<feature type="glycosylation site" description="N-linked (GlcNAc...) asparagine" evidence="2">
    <location>
        <position position="128"/>
    </location>
</feature>
<feature type="glycosylation site" description="N-linked (GlcNAc...) asparagine" evidence="2">
    <location>
        <position position="136"/>
    </location>
</feature>
<feature type="glycosylation site" description="N-linked (GlcNAc...) asparagine" evidence="2">
    <location>
        <position position="177"/>
    </location>
</feature>
<feature type="glycosylation site" description="N-linked (GlcNAc...) asparagine" evidence="2">
    <location>
        <position position="202"/>
    </location>
</feature>
<feature type="glycosylation site" description="N-linked (GlcNAc...) asparagine" evidence="2">
    <location>
        <position position="230"/>
    </location>
</feature>
<feature type="glycosylation site" description="N-linked (GlcNAc...) asparagine" evidence="2">
    <location>
        <position position="242"/>
    </location>
</feature>
<feature type="glycosylation site" description="N-linked (GlcNAc...) asparagine" evidence="2">
    <location>
        <position position="313"/>
    </location>
</feature>
<feature type="glycosylation site" description="N-linked (GlcNAc...) asparagine" evidence="2">
    <location>
        <position position="328"/>
    </location>
</feature>
<feature type="glycosylation site" description="N-linked (GlcNAc...) asparagine" evidence="2">
    <location>
        <position position="343"/>
    </location>
</feature>
<feature type="glycosylation site" description="N-linked (GlcNAc...) asparagine" evidence="2">
    <location>
        <position position="375"/>
    </location>
</feature>
<feature type="glycosylation site" description="N-linked (GlcNAc...) asparagine" evidence="2">
    <location>
        <position position="388"/>
    </location>
</feature>
<feature type="glycosylation site" description="N-linked (GlcNAc...) asparagine" evidence="2">
    <location>
        <position position="417"/>
    </location>
</feature>
<feature type="glycosylation site" description="N-linked (GlcNAc...) asparagine" evidence="2">
    <location>
        <position position="424"/>
    </location>
</feature>
<feature type="glycosylation site" description="N-linked (GlcNAc...) asparagine" evidence="2">
    <location>
        <position position="425"/>
    </location>
</feature>
<feature type="glycosylation site" description="N-linked (GlcNAc...) asparagine" evidence="2">
    <location>
        <position position="480"/>
    </location>
</feature>
<feature type="glycosylation site" description="N-linked (GlcNAc...) asparagine" evidence="2">
    <location>
        <position position="481"/>
    </location>
</feature>
<organism>
    <name type="scientific">Candida albicans (strain SC5314 / ATCC MYA-2876)</name>
    <name type="common">Yeast</name>
    <dbReference type="NCBI Taxonomy" id="237561"/>
    <lineage>
        <taxon>Eukaryota</taxon>
        <taxon>Fungi</taxon>
        <taxon>Dikarya</taxon>
        <taxon>Ascomycota</taxon>
        <taxon>Saccharomycotina</taxon>
        <taxon>Pichiomycetes</taxon>
        <taxon>Debaryomycetaceae</taxon>
        <taxon>Candida/Lodderomyces clade</taxon>
        <taxon>Candida</taxon>
    </lineage>
</organism>
<accession>Q5AND1</accession>
<accession>A0A1D8PK41</accession>